<dbReference type="EC" id="3.1.26.11" evidence="1"/>
<dbReference type="EMBL" id="CP000077">
    <property type="protein sequence ID" value="AAY80626.1"/>
    <property type="molecule type" value="Genomic_DNA"/>
</dbReference>
<dbReference type="RefSeq" id="WP_011278128.1">
    <property type="nucleotide sequence ID" value="NC_007181.1"/>
</dbReference>
<dbReference type="SMR" id="Q4J9A4"/>
<dbReference type="STRING" id="330779.Saci_1284"/>
<dbReference type="GeneID" id="14551789"/>
<dbReference type="GeneID" id="78441630"/>
<dbReference type="KEGG" id="sai:Saci_1284"/>
<dbReference type="PATRIC" id="fig|330779.12.peg.1242"/>
<dbReference type="eggNOG" id="arCOG00501">
    <property type="taxonomic scope" value="Archaea"/>
</dbReference>
<dbReference type="HOGENOM" id="CLU_031317_2_1_2"/>
<dbReference type="Proteomes" id="UP000001018">
    <property type="component" value="Chromosome"/>
</dbReference>
<dbReference type="GO" id="GO:0042781">
    <property type="term" value="F:3'-tRNA processing endoribonuclease activity"/>
    <property type="evidence" value="ECO:0007669"/>
    <property type="project" value="UniProtKB-UniRule"/>
</dbReference>
<dbReference type="GO" id="GO:0008270">
    <property type="term" value="F:zinc ion binding"/>
    <property type="evidence" value="ECO:0007669"/>
    <property type="project" value="UniProtKB-UniRule"/>
</dbReference>
<dbReference type="CDD" id="cd07717">
    <property type="entry name" value="RNaseZ_ZiPD-like_MBL-fold"/>
    <property type="match status" value="1"/>
</dbReference>
<dbReference type="Gene3D" id="3.60.15.10">
    <property type="entry name" value="Ribonuclease Z/Hydroxyacylglutathione hydrolase-like"/>
    <property type="match status" value="1"/>
</dbReference>
<dbReference type="HAMAP" id="MF_01818">
    <property type="entry name" value="RNase_Z_BN"/>
    <property type="match status" value="1"/>
</dbReference>
<dbReference type="InterPro" id="IPR001279">
    <property type="entry name" value="Metallo-B-lactamas"/>
</dbReference>
<dbReference type="InterPro" id="IPR036866">
    <property type="entry name" value="RibonucZ/Hydroxyglut_hydro"/>
</dbReference>
<dbReference type="InterPro" id="IPR013471">
    <property type="entry name" value="RNase_Z/BN"/>
</dbReference>
<dbReference type="NCBIfam" id="NF000801">
    <property type="entry name" value="PRK00055.1-3"/>
    <property type="match status" value="1"/>
</dbReference>
<dbReference type="NCBIfam" id="TIGR02651">
    <property type="entry name" value="RNase_Z"/>
    <property type="match status" value="1"/>
</dbReference>
<dbReference type="PANTHER" id="PTHR46018">
    <property type="entry name" value="ZINC PHOSPHODIESTERASE ELAC PROTEIN 1"/>
    <property type="match status" value="1"/>
</dbReference>
<dbReference type="PANTHER" id="PTHR46018:SF2">
    <property type="entry name" value="ZINC PHOSPHODIESTERASE ELAC PROTEIN 1"/>
    <property type="match status" value="1"/>
</dbReference>
<dbReference type="Pfam" id="PF12706">
    <property type="entry name" value="Lactamase_B_2"/>
    <property type="match status" value="1"/>
</dbReference>
<dbReference type="SUPFAM" id="SSF56281">
    <property type="entry name" value="Metallo-hydrolase/oxidoreductase"/>
    <property type="match status" value="1"/>
</dbReference>
<protein>
    <recommendedName>
        <fullName evidence="1">Ribonuclease Z</fullName>
        <shortName evidence="1">RNase Z</shortName>
        <ecNumber evidence="1">3.1.26.11</ecNumber>
    </recommendedName>
    <alternativeName>
        <fullName evidence="1">tRNA 3 endonuclease</fullName>
    </alternativeName>
    <alternativeName>
        <fullName evidence="1">tRNase Z</fullName>
    </alternativeName>
</protein>
<keyword id="KW-0255">Endonuclease</keyword>
<keyword id="KW-0378">Hydrolase</keyword>
<keyword id="KW-0479">Metal-binding</keyword>
<keyword id="KW-0540">Nuclease</keyword>
<keyword id="KW-1185">Reference proteome</keyword>
<keyword id="KW-0819">tRNA processing</keyword>
<keyword id="KW-0862">Zinc</keyword>
<proteinExistence type="inferred from homology"/>
<gene>
    <name evidence="1" type="primary">rnz</name>
    <name type="ordered locus">Saci_1284</name>
</gene>
<feature type="chain" id="PRO_0000155936" description="Ribonuclease Z">
    <location>
        <begin position="1"/>
        <end position="292"/>
    </location>
</feature>
<feature type="active site" description="Proton acceptor" evidence="1">
    <location>
        <position position="64"/>
    </location>
</feature>
<feature type="binding site" evidence="1">
    <location>
        <position position="60"/>
    </location>
    <ligand>
        <name>Zn(2+)</name>
        <dbReference type="ChEBI" id="CHEBI:29105"/>
        <label>1</label>
        <note>catalytic</note>
    </ligand>
</feature>
<feature type="binding site" evidence="1">
    <location>
        <position position="62"/>
    </location>
    <ligand>
        <name>Zn(2+)</name>
        <dbReference type="ChEBI" id="CHEBI:29105"/>
        <label>1</label>
        <note>catalytic</note>
    </ligand>
</feature>
<feature type="binding site" evidence="1">
    <location>
        <position position="64"/>
    </location>
    <ligand>
        <name>Zn(2+)</name>
        <dbReference type="ChEBI" id="CHEBI:29105"/>
        <label>2</label>
        <note>catalytic</note>
    </ligand>
</feature>
<feature type="binding site" evidence="1">
    <location>
        <position position="65"/>
    </location>
    <ligand>
        <name>Zn(2+)</name>
        <dbReference type="ChEBI" id="CHEBI:29105"/>
        <label>2</label>
        <note>catalytic</note>
    </ligand>
</feature>
<feature type="binding site" evidence="1">
    <location>
        <position position="132"/>
    </location>
    <ligand>
        <name>Zn(2+)</name>
        <dbReference type="ChEBI" id="CHEBI:29105"/>
        <label>1</label>
        <note>catalytic</note>
    </ligand>
</feature>
<feature type="binding site" evidence="1">
    <location>
        <position position="200"/>
    </location>
    <ligand>
        <name>Zn(2+)</name>
        <dbReference type="ChEBI" id="CHEBI:29105"/>
        <label>1</label>
        <note>catalytic</note>
    </ligand>
</feature>
<feature type="binding site" evidence="1">
    <location>
        <position position="200"/>
    </location>
    <ligand>
        <name>Zn(2+)</name>
        <dbReference type="ChEBI" id="CHEBI:29105"/>
        <label>2</label>
        <note>catalytic</note>
    </ligand>
</feature>
<feature type="binding site" evidence="1">
    <location>
        <position position="256"/>
    </location>
    <ligand>
        <name>Zn(2+)</name>
        <dbReference type="ChEBI" id="CHEBI:29105"/>
        <label>2</label>
        <note>catalytic</note>
    </ligand>
</feature>
<organism>
    <name type="scientific">Sulfolobus acidocaldarius (strain ATCC 33909 / DSM 639 / JCM 8929 / NBRC 15157 / NCIMB 11770)</name>
    <dbReference type="NCBI Taxonomy" id="330779"/>
    <lineage>
        <taxon>Archaea</taxon>
        <taxon>Thermoproteota</taxon>
        <taxon>Thermoprotei</taxon>
        <taxon>Sulfolobales</taxon>
        <taxon>Sulfolobaceae</taxon>
        <taxon>Sulfolobus</taxon>
    </lineage>
</organism>
<sequence>MFEIIFIGVGGGAPNKRGLPGILIRREGFEILLDCGEGTQNKMIEHSISFMKLNLIGISHLHGDHVLGLPGIIQTMAMYSRQQKLLLMGPTTLQDYLKSSSKHTYFKPGFETEFIQSYEDQNLTITTFRTCHTIESYGFLIKEKDKTKVDAERLKKEGITDWRIIRKLKEGKRVEIDTKVFLPEDYLYVKKGLSIAYTGDTAPCDSVLNAIKGVDLLIHDSTFLNEREAHDYGHSNCTDAAEIASKADVKRLALYHISGRYQTTEPLLKEAKKIFERTFLPEPLSYFILQEE</sequence>
<reference key="1">
    <citation type="journal article" date="2005" name="J. Bacteriol.">
        <title>The genome of Sulfolobus acidocaldarius, a model organism of the Crenarchaeota.</title>
        <authorList>
            <person name="Chen L."/>
            <person name="Bruegger K."/>
            <person name="Skovgaard M."/>
            <person name="Redder P."/>
            <person name="She Q."/>
            <person name="Torarinsson E."/>
            <person name="Greve B."/>
            <person name="Awayez M."/>
            <person name="Zibat A."/>
            <person name="Klenk H.-P."/>
            <person name="Garrett R.A."/>
        </authorList>
    </citation>
    <scope>NUCLEOTIDE SEQUENCE [LARGE SCALE GENOMIC DNA]</scope>
    <source>
        <strain>ATCC 33909 / DSM 639 / JCM 8929 / NBRC 15157 / NCIMB 11770</strain>
    </source>
</reference>
<comment type="function">
    <text evidence="1">Zinc phosphodiesterase, which displays some tRNA 3'-processing endonuclease activity. Probably involved in tRNA maturation, by removing a 3'-trailer from precursor tRNA.</text>
</comment>
<comment type="catalytic activity">
    <reaction evidence="1">
        <text>Endonucleolytic cleavage of RNA, removing extra 3' nucleotides from tRNA precursor, generating 3' termini of tRNAs. A 3'-hydroxy group is left at the tRNA terminus and a 5'-phosphoryl group is left at the trailer molecule.</text>
        <dbReference type="EC" id="3.1.26.11"/>
    </reaction>
</comment>
<comment type="cofactor">
    <cofactor evidence="1">
        <name>Zn(2+)</name>
        <dbReference type="ChEBI" id="CHEBI:29105"/>
    </cofactor>
    <text evidence="1">Binds 2 Zn(2+) ions.</text>
</comment>
<comment type="subunit">
    <text evidence="1">Homodimer.</text>
</comment>
<comment type="similarity">
    <text evidence="1">Belongs to the RNase Z family.</text>
</comment>
<evidence type="ECO:0000255" key="1">
    <source>
        <dbReference type="HAMAP-Rule" id="MF_01818"/>
    </source>
</evidence>
<accession>Q4J9A4</accession>
<name>RNZ_SULAC</name>